<feature type="initiator methionine" description="Removed" evidence="1">
    <location>
        <position position="1"/>
    </location>
</feature>
<feature type="chain" id="PRO_0000326139" description="Serine/threonine-protein kinase PRP4 homolog">
    <location>
        <begin position="2"/>
        <end position="1007"/>
    </location>
</feature>
<feature type="domain" description="Protein kinase" evidence="4">
    <location>
        <begin position="687"/>
        <end position="1003"/>
    </location>
</feature>
<feature type="region of interest" description="Disordered" evidence="6">
    <location>
        <begin position="1"/>
        <end position="99"/>
    </location>
</feature>
<feature type="region of interest" description="Disordered" evidence="6">
    <location>
        <begin position="140"/>
        <end position="533"/>
    </location>
</feature>
<feature type="region of interest" description="Disordered" evidence="6">
    <location>
        <begin position="559"/>
        <end position="583"/>
    </location>
</feature>
<feature type="compositionally biased region" description="Polar residues" evidence="6">
    <location>
        <begin position="1"/>
        <end position="10"/>
    </location>
</feature>
<feature type="compositionally biased region" description="Basic residues" evidence="6">
    <location>
        <begin position="39"/>
        <end position="59"/>
    </location>
</feature>
<feature type="compositionally biased region" description="Basic residues" evidence="6">
    <location>
        <begin position="67"/>
        <end position="81"/>
    </location>
</feature>
<feature type="compositionally biased region" description="Basic and acidic residues" evidence="6">
    <location>
        <begin position="82"/>
        <end position="91"/>
    </location>
</feature>
<feature type="compositionally biased region" description="Low complexity" evidence="6">
    <location>
        <begin position="157"/>
        <end position="168"/>
    </location>
</feature>
<feature type="compositionally biased region" description="Basic residues" evidence="6">
    <location>
        <begin position="179"/>
        <end position="202"/>
    </location>
</feature>
<feature type="compositionally biased region" description="Basic residues" evidence="6">
    <location>
        <begin position="214"/>
        <end position="230"/>
    </location>
</feature>
<feature type="compositionally biased region" description="Basic and acidic residues" evidence="6">
    <location>
        <begin position="247"/>
        <end position="270"/>
    </location>
</feature>
<feature type="compositionally biased region" description="Basic residues" evidence="6">
    <location>
        <begin position="302"/>
        <end position="315"/>
    </location>
</feature>
<feature type="compositionally biased region" description="Basic and acidic residues" evidence="6">
    <location>
        <begin position="316"/>
        <end position="325"/>
    </location>
</feature>
<feature type="compositionally biased region" description="Basic residues" evidence="6">
    <location>
        <begin position="342"/>
        <end position="367"/>
    </location>
</feature>
<feature type="compositionally biased region" description="Basic and acidic residues" evidence="6">
    <location>
        <begin position="395"/>
        <end position="408"/>
    </location>
</feature>
<feature type="compositionally biased region" description="Basic and acidic residues" evidence="6">
    <location>
        <begin position="415"/>
        <end position="429"/>
    </location>
</feature>
<feature type="compositionally biased region" description="Basic residues" evidence="6">
    <location>
        <begin position="438"/>
        <end position="497"/>
    </location>
</feature>
<feature type="compositionally biased region" description="Acidic residues" evidence="6">
    <location>
        <begin position="518"/>
        <end position="533"/>
    </location>
</feature>
<feature type="compositionally biased region" description="Low complexity" evidence="6">
    <location>
        <begin position="562"/>
        <end position="581"/>
    </location>
</feature>
<feature type="active site" description="Proton acceptor" evidence="4 5">
    <location>
        <position position="815"/>
    </location>
</feature>
<feature type="binding site" evidence="4">
    <location>
        <begin position="693"/>
        <end position="701"/>
    </location>
    <ligand>
        <name>ATP</name>
        <dbReference type="ChEBI" id="CHEBI:30616"/>
    </ligand>
</feature>
<feature type="binding site" evidence="4">
    <location>
        <position position="717"/>
    </location>
    <ligand>
        <name>ATP</name>
        <dbReference type="ChEBI" id="CHEBI:30616"/>
    </ligand>
</feature>
<feature type="modified residue" description="N-acetylalanine" evidence="1">
    <location>
        <position position="2"/>
    </location>
</feature>
<feature type="modified residue" description="Phosphoserine" evidence="2">
    <location>
        <position position="8"/>
    </location>
</feature>
<feature type="modified residue" description="Phosphoserine" evidence="1">
    <location>
        <position position="20"/>
    </location>
</feature>
<feature type="modified residue" description="Phosphoserine" evidence="1">
    <location>
        <position position="23"/>
    </location>
</feature>
<feature type="modified residue" description="Phosphoserine" evidence="1">
    <location>
        <position position="32"/>
    </location>
</feature>
<feature type="modified residue" description="Phosphoserine" evidence="1">
    <location>
        <position position="87"/>
    </location>
</feature>
<feature type="modified residue" description="Phosphoserine" evidence="1">
    <location>
        <position position="93"/>
    </location>
</feature>
<feature type="modified residue" description="N6-acetyllysine; alternate" evidence="3">
    <location>
        <position position="99"/>
    </location>
</feature>
<feature type="modified residue" description="Phosphoserine" evidence="1">
    <location>
        <position position="131"/>
    </location>
</feature>
<feature type="modified residue" description="Phosphotyrosine" evidence="1">
    <location>
        <position position="140"/>
    </location>
</feature>
<feature type="modified residue" description="Phosphoserine" evidence="1">
    <location>
        <position position="142"/>
    </location>
</feature>
<feature type="modified residue" description="Phosphoserine" evidence="1">
    <location>
        <position position="144"/>
    </location>
</feature>
<feature type="modified residue" description="Phosphoserine" evidence="1">
    <location>
        <position position="166"/>
    </location>
</feature>
<feature type="modified residue" description="Phosphoserine" evidence="1">
    <location>
        <position position="239"/>
    </location>
</feature>
<feature type="modified residue" description="Phosphoserine" evidence="1">
    <location>
        <position position="241"/>
    </location>
</feature>
<feature type="modified residue" description="Phosphoserine" evidence="1">
    <location>
        <position position="257"/>
    </location>
</feature>
<feature type="modified residue" description="Phosphoserine" evidence="1">
    <location>
        <position position="277"/>
    </location>
</feature>
<feature type="modified residue" description="Phosphoserine" evidence="1">
    <location>
        <position position="283"/>
    </location>
</feature>
<feature type="modified residue" description="Phosphoserine" evidence="1">
    <location>
        <position position="292"/>
    </location>
</feature>
<feature type="modified residue" description="Phosphoserine" evidence="1">
    <location>
        <position position="294"/>
    </location>
</feature>
<feature type="modified residue" description="Phosphoserine" evidence="1">
    <location>
        <position position="328"/>
    </location>
</feature>
<feature type="modified residue" description="Phosphoserine" evidence="1">
    <location>
        <position position="354"/>
    </location>
</feature>
<feature type="modified residue" description="Phosphoserine" evidence="1">
    <location>
        <position position="356"/>
    </location>
</feature>
<feature type="modified residue" description="Phosphoserine" evidence="1">
    <location>
        <position position="366"/>
    </location>
</feature>
<feature type="modified residue" description="Phosphoserine" evidence="1">
    <location>
        <position position="368"/>
    </location>
</feature>
<feature type="modified residue" description="Phosphothreonine" evidence="1">
    <location>
        <position position="385"/>
    </location>
</feature>
<feature type="modified residue" description="Phosphoserine" evidence="1">
    <location>
        <position position="387"/>
    </location>
</feature>
<feature type="modified residue" description="Phosphoserine" evidence="1">
    <location>
        <position position="427"/>
    </location>
</feature>
<feature type="modified residue" description="Phosphoserine" evidence="1">
    <location>
        <position position="431"/>
    </location>
</feature>
<feature type="modified residue" description="Phosphoserine" evidence="1">
    <location>
        <position position="437"/>
    </location>
</feature>
<feature type="modified residue" description="Phosphoserine" evidence="1">
    <location>
        <position position="518"/>
    </location>
</feature>
<feature type="modified residue" description="Phosphoserine" evidence="1">
    <location>
        <position position="519"/>
    </location>
</feature>
<feature type="modified residue" description="Phosphoserine" evidence="1">
    <location>
        <position position="520"/>
    </location>
</feature>
<feature type="modified residue" description="Phosphoserine" evidence="1">
    <location>
        <position position="565"/>
    </location>
</feature>
<feature type="modified residue" description="Phosphoserine" evidence="1">
    <location>
        <position position="569"/>
    </location>
</feature>
<feature type="modified residue" description="Phosphoserine" evidence="1">
    <location>
        <position position="578"/>
    </location>
</feature>
<feature type="modified residue" description="Phosphoserine" evidence="1">
    <location>
        <position position="580"/>
    </location>
</feature>
<feature type="modified residue" description="N6-acetyllysine" evidence="1">
    <location>
        <position position="717"/>
    </location>
</feature>
<feature type="modified residue" description="Phosphotyrosine" evidence="1">
    <location>
        <position position="849"/>
    </location>
</feature>
<feature type="modified residue" description="Phosphoserine" evidence="2">
    <location>
        <position position="852"/>
    </location>
</feature>
<feature type="cross-link" description="Glycyl lysine isopeptide (Lys-Gly) (interchain with G-Cter in SUMO2); alternate" evidence="1">
    <location>
        <position position="99"/>
    </location>
</feature>
<feature type="cross-link" description="Glycyl lysine isopeptide (Lys-Gly) (interchain with G-Cter in SUMO2)" evidence="1">
    <location>
        <position position="111"/>
    </location>
</feature>
<feature type="cross-link" description="Glycyl lysine isopeptide (Lys-Gly) (interchain with G-Cter in SUMO1); alternate" evidence="1">
    <location>
        <position position="117"/>
    </location>
</feature>
<feature type="cross-link" description="Glycyl lysine isopeptide (Lys-Gly) (interchain with G-Cter in SUMO2); alternate" evidence="1">
    <location>
        <position position="117"/>
    </location>
</feature>
<feature type="cross-link" description="Glycyl lysine isopeptide (Lys-Gly) (interchain with G-Cter in SUMO2)" evidence="1">
    <location>
        <position position="170"/>
    </location>
</feature>
<feature type="cross-link" description="Glycyl lysine isopeptide (Lys-Gly) (interchain with G-Cter in SUMO2)" evidence="1">
    <location>
        <position position="177"/>
    </location>
</feature>
<feature type="cross-link" description="Glycyl lysine isopeptide (Lys-Gly) (interchain with G-Cter in SUMO2)" evidence="1">
    <location>
        <position position="593"/>
    </location>
</feature>
<feature type="cross-link" description="Glycyl lysine isopeptide (Lys-Gly) (interchain with G-Cter in SUMO2)" evidence="1">
    <location>
        <position position="659"/>
    </location>
</feature>
<sequence length="1007" mass="116929">MAAAETQSLREQPEMEDANSEKSINEENGEVSEDQSQNKHSRHKKKKHKHRSKHKKHKHSSEEDKDKKHKHKHKHKKHKRKEVIDASDKEGMSPAKRTKLDDLALLEDLEKQRALIKAELDNELMEGKVQSGMGLILQGYESGSEEEGEIHEKARNGNRSSTRSSSTKGKLELVDNKITTKKRSKSRSKERTRHRSDKKKSKGGIEIIKEKTTRSKSKERKKSKSPSKRSKSQDQARKSKSPTLRRRSQEKIGKARSPTDDKVKIEDKSKSKDRKKSPIINESRSRDRGKKSRSPVDLRGKSKDRRSRSKERKSKRSETDKEKKPIKSPSKDASSGKENRSPSRRPGRSPKRRSLSPKPRDKSRRSRSPLLNDRRSKQSKSPSRTLSPGRRAKSRSLERKRREPERRRLSSPRTRPRDDILSRRERSKDASPINRWSPTRRRSRSPIRRRSRSPLRRSRSPRRRSRSPRRRDRGRRSRSRLRRRSRSRGGRRRRSRSKVKEDKFKGSLSEGMKVEQESSSDDNLEDFDVEEEDEEALIEQRRIQRQAIVQKYKYLAEDSNMSVPSEPSSPQSSTRTRSPSPDDILERVAADVKEYERENVDTFEASVKAKHNLMTVEQNNGSSQKKLLAPDMFTESDDMFAAYFDSARLRAAGIGKDFKENPNLRDNWTDAEGYYRVNIGEVLDKRYNVYGYTGQGVFSNVVRARDNARASQEVAVKIIRNNELMQKTGLKELEFLKKLNDADPDDKFHCLRLFRHFYHKQHLCLVFEPLSMNLREVLKKYGKDVGLHIKAVRSYSQQLFLALKLLKRCNILHADIKPDNILVNESKTILKLCDFGSASHVADNDITPYLVSRFYRAPEIIIGKSYDYGIDMWSVGCTLYELYTGKILFPGKTNNHMLKLAMDLKGKMPNKMIRKGVFKDQHFDPNLNFMYIEVDKVTEREKVTVMSTINPTKDLLADLIGCQRLPEDQRKKVHQLKDLLDQILMLDPAKRISINQALQHAFIQEKI</sequence>
<comment type="function">
    <text evidence="1">Serine/threonine kinase involved in spliceosomal assembly as well as mitosis and signaling regulation. Connects chromatin mediated regulation of transcription and pre-mRNA splicing. During spliceosomal assembly, interacts with and phosphorylates PRPF6 and PRPF31, components of the U4/U6-U5 tri-small nuclear ribonucleoprotein (snRNP), to facilitate the formation of the spliceosome B complex. Plays a role in regulating transcription and the spindle assembly checkpoint (SAC). Associates with U5 snRNP and NCOR1 deacetylase complexes which may allow a coordination of pre-mRNA splicing with chromatin remodeling events involved in transcriptional regulation. Associates and probably phosphorylates SMARCA4 and NCOR1. Phosphorylates SRSF1. Associates with kinetochores during mitosis and is necessary for recruitment and maintenance of the checkpoint proteins such as MAD1L1 and MAD12L1 at the kinetochores. Phosphorylates and regulates the activity of the transcription factors such as ELK1 and KLF13. Phosphorylates nuclear YAP1 and WWTR1/TAZ which induces nuclear exclusion and regulates Hippo signaling pathway, involved in tissue growth control.</text>
</comment>
<comment type="catalytic activity">
    <reaction evidence="1">
        <text>L-seryl-[protein] + ATP = O-phospho-L-seryl-[protein] + ADP + H(+)</text>
        <dbReference type="Rhea" id="RHEA:17989"/>
        <dbReference type="Rhea" id="RHEA-COMP:9863"/>
        <dbReference type="Rhea" id="RHEA-COMP:11604"/>
        <dbReference type="ChEBI" id="CHEBI:15378"/>
        <dbReference type="ChEBI" id="CHEBI:29999"/>
        <dbReference type="ChEBI" id="CHEBI:30616"/>
        <dbReference type="ChEBI" id="CHEBI:83421"/>
        <dbReference type="ChEBI" id="CHEBI:456216"/>
        <dbReference type="EC" id="2.7.11.1"/>
    </reaction>
    <physiologicalReaction direction="left-to-right" evidence="1">
        <dbReference type="Rhea" id="RHEA:17990"/>
    </physiologicalReaction>
</comment>
<comment type="catalytic activity">
    <reaction evidence="1">
        <text>L-threonyl-[protein] + ATP = O-phospho-L-threonyl-[protein] + ADP + H(+)</text>
        <dbReference type="Rhea" id="RHEA:46608"/>
        <dbReference type="Rhea" id="RHEA-COMP:11060"/>
        <dbReference type="Rhea" id="RHEA-COMP:11605"/>
        <dbReference type="ChEBI" id="CHEBI:15378"/>
        <dbReference type="ChEBI" id="CHEBI:30013"/>
        <dbReference type="ChEBI" id="CHEBI:30616"/>
        <dbReference type="ChEBI" id="CHEBI:61977"/>
        <dbReference type="ChEBI" id="CHEBI:456216"/>
        <dbReference type="EC" id="2.7.11.1"/>
    </reaction>
    <physiologicalReaction direction="left-to-right" evidence="1">
        <dbReference type="Rhea" id="RHEA:46609"/>
    </physiologicalReaction>
</comment>
<comment type="subunit">
    <text evidence="1">Interacts with CLK1 C-terminus. Associates with the U5 snRNP and NCOR1 deacetylase complexes. Identified in the spliceosome C complex.</text>
</comment>
<comment type="subcellular location">
    <subcellularLocation>
        <location evidence="1">Nucleus</location>
    </subcellularLocation>
    <subcellularLocation>
        <location evidence="1">Chromosome</location>
        <location evidence="1">Centromere</location>
        <location evidence="1">Kinetochore</location>
    </subcellularLocation>
    <text evidence="1">Located throughout the nucleus, excluding the nucleolus but enriched in multiple speckles.</text>
</comment>
<comment type="PTM">
    <text evidence="1">Phosphorylated by CLK1. Autophosphorylated; phosphorylation inhibits interaction with its targets, such as PRPF6 or SMARCA4.</text>
</comment>
<comment type="similarity">
    <text evidence="7">Belongs to the protein kinase superfamily. CMGC Ser/Thr protein kinase family.</text>
</comment>
<evidence type="ECO:0000250" key="1">
    <source>
        <dbReference type="UniProtKB" id="Q13523"/>
    </source>
</evidence>
<evidence type="ECO:0000250" key="2">
    <source>
        <dbReference type="UniProtKB" id="Q5RKH1"/>
    </source>
</evidence>
<evidence type="ECO:0000250" key="3">
    <source>
        <dbReference type="UniProtKB" id="Q61136"/>
    </source>
</evidence>
<evidence type="ECO:0000255" key="4">
    <source>
        <dbReference type="PROSITE-ProRule" id="PRU00159"/>
    </source>
</evidence>
<evidence type="ECO:0000255" key="5">
    <source>
        <dbReference type="PROSITE-ProRule" id="PRU10027"/>
    </source>
</evidence>
<evidence type="ECO:0000256" key="6">
    <source>
        <dbReference type="SAM" id="MobiDB-lite"/>
    </source>
</evidence>
<evidence type="ECO:0000305" key="7"/>
<proteinExistence type="evidence at transcript level"/>
<reference key="1">
    <citation type="submission" date="2004-11" db="EMBL/GenBank/DDBJ databases">
        <authorList>
            <consortium name="The German cDNA consortium"/>
        </authorList>
    </citation>
    <scope>NUCLEOTIDE SEQUENCE [LARGE SCALE MRNA]</scope>
    <source>
        <tissue>Kidney</tissue>
    </source>
</reference>
<keyword id="KW-0007">Acetylation</keyword>
<keyword id="KW-0067">ATP-binding</keyword>
<keyword id="KW-0137">Centromere</keyword>
<keyword id="KW-0158">Chromosome</keyword>
<keyword id="KW-1017">Isopeptide bond</keyword>
<keyword id="KW-0418">Kinase</keyword>
<keyword id="KW-0995">Kinetochore</keyword>
<keyword id="KW-0507">mRNA processing</keyword>
<keyword id="KW-0508">mRNA splicing</keyword>
<keyword id="KW-0547">Nucleotide-binding</keyword>
<keyword id="KW-0539">Nucleus</keyword>
<keyword id="KW-0597">Phosphoprotein</keyword>
<keyword id="KW-1185">Reference proteome</keyword>
<keyword id="KW-0723">Serine/threonine-protein kinase</keyword>
<keyword id="KW-0747">Spliceosome</keyword>
<keyword id="KW-0808">Transferase</keyword>
<keyword id="KW-0832">Ubl conjugation</keyword>
<gene>
    <name type="primary">PRP4K</name>
    <name type="synonym">PRPF4B</name>
</gene>
<name>PRP4K_PONAB</name>
<protein>
    <recommendedName>
        <fullName>Serine/threonine-protein kinase PRP4 homolog</fullName>
        <ecNumber>2.7.11.1</ecNumber>
    </recommendedName>
    <alternativeName>
        <fullName>PRP4 pre-mRNA-processing factor 4 homolog</fullName>
    </alternativeName>
</protein>
<organism>
    <name type="scientific">Pongo abelii</name>
    <name type="common">Sumatran orangutan</name>
    <name type="synonym">Pongo pygmaeus abelii</name>
    <dbReference type="NCBI Taxonomy" id="9601"/>
    <lineage>
        <taxon>Eukaryota</taxon>
        <taxon>Metazoa</taxon>
        <taxon>Chordata</taxon>
        <taxon>Craniata</taxon>
        <taxon>Vertebrata</taxon>
        <taxon>Euteleostomi</taxon>
        <taxon>Mammalia</taxon>
        <taxon>Eutheria</taxon>
        <taxon>Euarchontoglires</taxon>
        <taxon>Primates</taxon>
        <taxon>Haplorrhini</taxon>
        <taxon>Catarrhini</taxon>
        <taxon>Hominidae</taxon>
        <taxon>Pongo</taxon>
    </lineage>
</organism>
<dbReference type="EC" id="2.7.11.1"/>
<dbReference type="EMBL" id="CR859941">
    <property type="protein sequence ID" value="CAH92096.1"/>
    <property type="molecule type" value="mRNA"/>
</dbReference>
<dbReference type="RefSeq" id="NP_001126223.1">
    <property type="nucleotide sequence ID" value="NM_001132751.2"/>
</dbReference>
<dbReference type="SMR" id="Q5R814"/>
<dbReference type="FunCoup" id="Q5R814">
    <property type="interactions" value="5240"/>
</dbReference>
<dbReference type="STRING" id="9601.ENSPPYP00000018106"/>
<dbReference type="GeneID" id="100173192"/>
<dbReference type="KEGG" id="pon:100173192"/>
<dbReference type="CTD" id="8899"/>
<dbReference type="eggNOG" id="KOG0670">
    <property type="taxonomic scope" value="Eukaryota"/>
</dbReference>
<dbReference type="InParanoid" id="Q5R814"/>
<dbReference type="OrthoDB" id="3967at2759"/>
<dbReference type="Proteomes" id="UP000001595">
    <property type="component" value="Unplaced"/>
</dbReference>
<dbReference type="GO" id="GO:0000776">
    <property type="term" value="C:kinetochore"/>
    <property type="evidence" value="ECO:0000250"/>
    <property type="project" value="UniProtKB"/>
</dbReference>
<dbReference type="GO" id="GO:0016607">
    <property type="term" value="C:nuclear speck"/>
    <property type="evidence" value="ECO:0000250"/>
    <property type="project" value="UniProtKB"/>
</dbReference>
<dbReference type="GO" id="GO:0005681">
    <property type="term" value="C:spliceosomal complex"/>
    <property type="evidence" value="ECO:0007669"/>
    <property type="project" value="UniProtKB-KW"/>
</dbReference>
<dbReference type="GO" id="GO:0005524">
    <property type="term" value="F:ATP binding"/>
    <property type="evidence" value="ECO:0007669"/>
    <property type="project" value="UniProtKB-KW"/>
</dbReference>
<dbReference type="GO" id="GO:0106310">
    <property type="term" value="F:protein serine kinase activity"/>
    <property type="evidence" value="ECO:0007669"/>
    <property type="project" value="RHEA"/>
</dbReference>
<dbReference type="GO" id="GO:0004674">
    <property type="term" value="F:protein serine/threonine kinase activity"/>
    <property type="evidence" value="ECO:0000250"/>
    <property type="project" value="UniProtKB"/>
</dbReference>
<dbReference type="GO" id="GO:0045292">
    <property type="term" value="P:mRNA cis splicing, via spliceosome"/>
    <property type="evidence" value="ECO:0007669"/>
    <property type="project" value="InterPro"/>
</dbReference>
<dbReference type="GO" id="GO:0090266">
    <property type="term" value="P:regulation of mitotic cell cycle spindle assembly checkpoint"/>
    <property type="evidence" value="ECO:0000250"/>
    <property type="project" value="UniProtKB"/>
</dbReference>
<dbReference type="GO" id="GO:0000387">
    <property type="term" value="P:spliceosomal snRNP assembly"/>
    <property type="evidence" value="ECO:0000250"/>
    <property type="project" value="UniProtKB"/>
</dbReference>
<dbReference type="GO" id="GO:0000244">
    <property type="term" value="P:spliceosomal tri-snRNP complex assembly"/>
    <property type="evidence" value="ECO:0000250"/>
    <property type="project" value="UniProtKB"/>
</dbReference>
<dbReference type="CDD" id="cd14135">
    <property type="entry name" value="STKc_PRP4"/>
    <property type="match status" value="1"/>
</dbReference>
<dbReference type="FunFam" id="1.10.510.10:FF:000078">
    <property type="entry name" value="Serine/threonine-protein kinase PRP4 homolog"/>
    <property type="match status" value="1"/>
</dbReference>
<dbReference type="FunFam" id="3.30.200.20:FF:000123">
    <property type="entry name" value="serine/threonine-protein kinase PRP4 homolog"/>
    <property type="match status" value="1"/>
</dbReference>
<dbReference type="Gene3D" id="3.30.200.20">
    <property type="entry name" value="Phosphorylase Kinase, domain 1"/>
    <property type="match status" value="1"/>
</dbReference>
<dbReference type="Gene3D" id="1.10.510.10">
    <property type="entry name" value="Transferase(Phosphotransferase) domain 1"/>
    <property type="match status" value="1"/>
</dbReference>
<dbReference type="InterPro" id="IPR011009">
    <property type="entry name" value="Kinase-like_dom_sf"/>
</dbReference>
<dbReference type="InterPro" id="IPR000719">
    <property type="entry name" value="Prot_kinase_dom"/>
</dbReference>
<dbReference type="InterPro" id="IPR008271">
    <property type="entry name" value="Ser/Thr_kinase_AS"/>
</dbReference>
<dbReference type="InterPro" id="IPR050494">
    <property type="entry name" value="Ser_Thr_dual-spec_kinase"/>
</dbReference>
<dbReference type="InterPro" id="IPR044092">
    <property type="entry name" value="STKc_PRP4"/>
</dbReference>
<dbReference type="PANTHER" id="PTHR24058">
    <property type="entry name" value="DUAL SPECIFICITY PROTEIN KINASE"/>
    <property type="match status" value="1"/>
</dbReference>
<dbReference type="PANTHER" id="PTHR24058:SF103">
    <property type="entry name" value="SERINE_THREONINE-PROTEIN KINASE PRP4 HOMOLOG"/>
    <property type="match status" value="1"/>
</dbReference>
<dbReference type="Pfam" id="PF00069">
    <property type="entry name" value="Pkinase"/>
    <property type="match status" value="1"/>
</dbReference>
<dbReference type="SMART" id="SM00220">
    <property type="entry name" value="S_TKc"/>
    <property type="match status" value="1"/>
</dbReference>
<dbReference type="SUPFAM" id="SSF56112">
    <property type="entry name" value="Protein kinase-like (PK-like)"/>
    <property type="match status" value="1"/>
</dbReference>
<dbReference type="PROSITE" id="PS50011">
    <property type="entry name" value="PROTEIN_KINASE_DOM"/>
    <property type="match status" value="1"/>
</dbReference>
<dbReference type="PROSITE" id="PS00108">
    <property type="entry name" value="PROTEIN_KINASE_ST"/>
    <property type="match status" value="1"/>
</dbReference>
<accession>Q5R814</accession>